<accession>Q13EQ2</accession>
<sequence>MNQILPNSFRSGPDERGHFGIFGGRFVAETLMPLILELEKAYAEAKDDPAFRTEMDGYLKHYVGRPSPLYFAERLTEHFGGAKIYFKREDLNHTGAHKVNNVLGQIMLARRMGKQRIIAETGAGMHGVATATMCAKFGLQCVVYMGAVDVERQQPNVLRMKALGAEVRPVTSGANTLKDAMNEALRDWVTNVHDTFYCIGTVAGPHPYPMMVRDFQEVIGQEVREQILETEGRLPDSLIACIGGGSNAMGLFHPFLDDAGVVIYGVEAAGHGLSKLHAASIAGGKPGVLHGNRTYLLMDDDGQIQEAHSISAGLDYPGIGPEHAWLHDVGRVNFLSATDAEALDAFKLCCRLEGIIPALEPAHALAKVADLAPILPKDHLMVLNMSGRGDKDLASVAEHLGGKF</sequence>
<keyword id="KW-0028">Amino-acid biosynthesis</keyword>
<keyword id="KW-0057">Aromatic amino acid biosynthesis</keyword>
<keyword id="KW-0456">Lyase</keyword>
<keyword id="KW-0663">Pyridoxal phosphate</keyword>
<keyword id="KW-0822">Tryptophan biosynthesis</keyword>
<comment type="function">
    <text evidence="1">The beta subunit is responsible for the synthesis of L-tryptophan from indole and L-serine.</text>
</comment>
<comment type="catalytic activity">
    <reaction evidence="1">
        <text>(1S,2R)-1-C-(indol-3-yl)glycerol 3-phosphate + L-serine = D-glyceraldehyde 3-phosphate + L-tryptophan + H2O</text>
        <dbReference type="Rhea" id="RHEA:10532"/>
        <dbReference type="ChEBI" id="CHEBI:15377"/>
        <dbReference type="ChEBI" id="CHEBI:33384"/>
        <dbReference type="ChEBI" id="CHEBI:57912"/>
        <dbReference type="ChEBI" id="CHEBI:58866"/>
        <dbReference type="ChEBI" id="CHEBI:59776"/>
        <dbReference type="EC" id="4.2.1.20"/>
    </reaction>
</comment>
<comment type="cofactor">
    <cofactor evidence="1">
        <name>pyridoxal 5'-phosphate</name>
        <dbReference type="ChEBI" id="CHEBI:597326"/>
    </cofactor>
</comment>
<comment type="pathway">
    <text evidence="1">Amino-acid biosynthesis; L-tryptophan biosynthesis; L-tryptophan from chorismate: step 5/5.</text>
</comment>
<comment type="subunit">
    <text evidence="1">Tetramer of two alpha and two beta chains.</text>
</comment>
<comment type="similarity">
    <text evidence="1">Belongs to the TrpB family.</text>
</comment>
<name>TRPB_RHOPS</name>
<protein>
    <recommendedName>
        <fullName evidence="1">Tryptophan synthase beta chain</fullName>
        <ecNumber evidence="1">4.2.1.20</ecNumber>
    </recommendedName>
</protein>
<gene>
    <name evidence="1" type="primary">trpB</name>
    <name type="ordered locus">RPD_0197</name>
</gene>
<proteinExistence type="inferred from homology"/>
<feature type="chain" id="PRO_1000095813" description="Tryptophan synthase beta chain">
    <location>
        <begin position="1"/>
        <end position="404"/>
    </location>
</feature>
<feature type="modified residue" description="N6-(pyridoxal phosphate)lysine" evidence="1">
    <location>
        <position position="98"/>
    </location>
</feature>
<evidence type="ECO:0000255" key="1">
    <source>
        <dbReference type="HAMAP-Rule" id="MF_00133"/>
    </source>
</evidence>
<organism>
    <name type="scientific">Rhodopseudomonas palustris (strain BisB5)</name>
    <dbReference type="NCBI Taxonomy" id="316057"/>
    <lineage>
        <taxon>Bacteria</taxon>
        <taxon>Pseudomonadati</taxon>
        <taxon>Pseudomonadota</taxon>
        <taxon>Alphaproteobacteria</taxon>
        <taxon>Hyphomicrobiales</taxon>
        <taxon>Nitrobacteraceae</taxon>
        <taxon>Rhodopseudomonas</taxon>
    </lineage>
</organism>
<reference key="1">
    <citation type="submission" date="2006-03" db="EMBL/GenBank/DDBJ databases">
        <title>Complete sequence of Rhodopseudomonas palustris BisB5.</title>
        <authorList>
            <consortium name="US DOE Joint Genome Institute"/>
            <person name="Copeland A."/>
            <person name="Lucas S."/>
            <person name="Lapidus A."/>
            <person name="Barry K."/>
            <person name="Detter J.C."/>
            <person name="Glavina del Rio T."/>
            <person name="Hammon N."/>
            <person name="Israni S."/>
            <person name="Dalin E."/>
            <person name="Tice H."/>
            <person name="Pitluck S."/>
            <person name="Chain P."/>
            <person name="Malfatti S."/>
            <person name="Shin M."/>
            <person name="Vergez L."/>
            <person name="Schmutz J."/>
            <person name="Larimer F."/>
            <person name="Land M."/>
            <person name="Hauser L."/>
            <person name="Pelletier D.A."/>
            <person name="Kyrpides N."/>
            <person name="Lykidis A."/>
            <person name="Oda Y."/>
            <person name="Harwood C.S."/>
            <person name="Richardson P."/>
        </authorList>
    </citation>
    <scope>NUCLEOTIDE SEQUENCE [LARGE SCALE GENOMIC DNA]</scope>
    <source>
        <strain>BisB5</strain>
    </source>
</reference>
<dbReference type="EC" id="4.2.1.20" evidence="1"/>
<dbReference type="EMBL" id="CP000283">
    <property type="protein sequence ID" value="ABE37437.1"/>
    <property type="molecule type" value="Genomic_DNA"/>
</dbReference>
<dbReference type="SMR" id="Q13EQ2"/>
<dbReference type="STRING" id="316057.RPD_0197"/>
<dbReference type="KEGG" id="rpd:RPD_0197"/>
<dbReference type="eggNOG" id="COG0133">
    <property type="taxonomic scope" value="Bacteria"/>
</dbReference>
<dbReference type="HOGENOM" id="CLU_016734_3_1_5"/>
<dbReference type="BioCyc" id="RPAL316057:RPD_RS01000-MONOMER"/>
<dbReference type="UniPathway" id="UPA00035">
    <property type="reaction ID" value="UER00044"/>
</dbReference>
<dbReference type="Proteomes" id="UP000001818">
    <property type="component" value="Chromosome"/>
</dbReference>
<dbReference type="GO" id="GO:0005737">
    <property type="term" value="C:cytoplasm"/>
    <property type="evidence" value="ECO:0007669"/>
    <property type="project" value="TreeGrafter"/>
</dbReference>
<dbReference type="GO" id="GO:0004834">
    <property type="term" value="F:tryptophan synthase activity"/>
    <property type="evidence" value="ECO:0007669"/>
    <property type="project" value="UniProtKB-UniRule"/>
</dbReference>
<dbReference type="CDD" id="cd06446">
    <property type="entry name" value="Trp-synth_B"/>
    <property type="match status" value="1"/>
</dbReference>
<dbReference type="FunFam" id="3.40.50.1100:FF:000001">
    <property type="entry name" value="Tryptophan synthase beta chain"/>
    <property type="match status" value="1"/>
</dbReference>
<dbReference type="FunFam" id="3.40.50.1100:FF:000004">
    <property type="entry name" value="Tryptophan synthase beta chain"/>
    <property type="match status" value="1"/>
</dbReference>
<dbReference type="Gene3D" id="3.40.50.1100">
    <property type="match status" value="2"/>
</dbReference>
<dbReference type="HAMAP" id="MF_00133">
    <property type="entry name" value="Trp_synth_beta"/>
    <property type="match status" value="1"/>
</dbReference>
<dbReference type="InterPro" id="IPR006653">
    <property type="entry name" value="Trp_synth_b_CS"/>
</dbReference>
<dbReference type="InterPro" id="IPR006654">
    <property type="entry name" value="Trp_synth_beta"/>
</dbReference>
<dbReference type="InterPro" id="IPR023026">
    <property type="entry name" value="Trp_synth_beta/beta-like"/>
</dbReference>
<dbReference type="InterPro" id="IPR001926">
    <property type="entry name" value="TrpB-like_PALP"/>
</dbReference>
<dbReference type="InterPro" id="IPR036052">
    <property type="entry name" value="TrpB-like_PALP_sf"/>
</dbReference>
<dbReference type="NCBIfam" id="TIGR00263">
    <property type="entry name" value="trpB"/>
    <property type="match status" value="1"/>
</dbReference>
<dbReference type="PANTHER" id="PTHR48077:SF3">
    <property type="entry name" value="TRYPTOPHAN SYNTHASE"/>
    <property type="match status" value="1"/>
</dbReference>
<dbReference type="PANTHER" id="PTHR48077">
    <property type="entry name" value="TRYPTOPHAN SYNTHASE-RELATED"/>
    <property type="match status" value="1"/>
</dbReference>
<dbReference type="Pfam" id="PF00291">
    <property type="entry name" value="PALP"/>
    <property type="match status" value="1"/>
</dbReference>
<dbReference type="PIRSF" id="PIRSF001413">
    <property type="entry name" value="Trp_syn_beta"/>
    <property type="match status" value="1"/>
</dbReference>
<dbReference type="SUPFAM" id="SSF53686">
    <property type="entry name" value="Tryptophan synthase beta subunit-like PLP-dependent enzymes"/>
    <property type="match status" value="1"/>
</dbReference>
<dbReference type="PROSITE" id="PS00168">
    <property type="entry name" value="TRP_SYNTHASE_BETA"/>
    <property type="match status" value="1"/>
</dbReference>